<keyword id="KW-0004">4Fe-4S</keyword>
<keyword id="KW-0963">Cytoplasm</keyword>
<keyword id="KW-1015">Disulfide bond</keyword>
<keyword id="KW-0408">Iron</keyword>
<keyword id="KW-0411">Iron-sulfur</keyword>
<keyword id="KW-0479">Metal-binding</keyword>
<keyword id="KW-0489">Methyltransferase</keyword>
<keyword id="KW-0698">rRNA processing</keyword>
<keyword id="KW-0949">S-adenosyl-L-methionine</keyword>
<keyword id="KW-0808">Transferase</keyword>
<keyword id="KW-0819">tRNA processing</keyword>
<protein>
    <recommendedName>
        <fullName evidence="1">Probable dual-specificity RNA methyltransferase RlmN</fullName>
        <ecNumber evidence="1">2.1.1.192</ecNumber>
    </recommendedName>
    <alternativeName>
        <fullName evidence="1">23S rRNA (adenine(2503)-C(2))-methyltransferase</fullName>
    </alternativeName>
    <alternativeName>
        <fullName evidence="1">23S rRNA m2A2503 methyltransferase</fullName>
    </alternativeName>
    <alternativeName>
        <fullName evidence="1">Ribosomal RNA large subunit methyltransferase N</fullName>
    </alternativeName>
    <alternativeName>
        <fullName evidence="1">tRNA (adenine(37)-C(2))-methyltransferase</fullName>
    </alternativeName>
    <alternativeName>
        <fullName evidence="1">tRNA m2A37 methyltransferase</fullName>
    </alternativeName>
</protein>
<dbReference type="EC" id="2.1.1.192" evidence="1"/>
<dbReference type="EMBL" id="FM204883">
    <property type="protein sequence ID" value="CAW92902.1"/>
    <property type="molecule type" value="Genomic_DNA"/>
</dbReference>
<dbReference type="RefSeq" id="WP_012679163.1">
    <property type="nucleotide sequence ID" value="NC_012471.1"/>
</dbReference>
<dbReference type="SMR" id="C0MBZ4"/>
<dbReference type="KEGG" id="seu:SEQ_0609"/>
<dbReference type="HOGENOM" id="CLU_029101_0_1_9"/>
<dbReference type="OrthoDB" id="9793973at2"/>
<dbReference type="Proteomes" id="UP000001365">
    <property type="component" value="Chromosome"/>
</dbReference>
<dbReference type="GO" id="GO:0005737">
    <property type="term" value="C:cytoplasm"/>
    <property type="evidence" value="ECO:0007669"/>
    <property type="project" value="UniProtKB-SubCell"/>
</dbReference>
<dbReference type="GO" id="GO:0051539">
    <property type="term" value="F:4 iron, 4 sulfur cluster binding"/>
    <property type="evidence" value="ECO:0007669"/>
    <property type="project" value="UniProtKB-UniRule"/>
</dbReference>
<dbReference type="GO" id="GO:0046872">
    <property type="term" value="F:metal ion binding"/>
    <property type="evidence" value="ECO:0007669"/>
    <property type="project" value="UniProtKB-KW"/>
</dbReference>
<dbReference type="GO" id="GO:0070040">
    <property type="term" value="F:rRNA (adenine(2503)-C2-)-methyltransferase activity"/>
    <property type="evidence" value="ECO:0007669"/>
    <property type="project" value="UniProtKB-UniRule"/>
</dbReference>
<dbReference type="GO" id="GO:0019843">
    <property type="term" value="F:rRNA binding"/>
    <property type="evidence" value="ECO:0007669"/>
    <property type="project" value="UniProtKB-UniRule"/>
</dbReference>
<dbReference type="GO" id="GO:0002935">
    <property type="term" value="F:tRNA (adenine(37)-C2)-methyltransferase activity"/>
    <property type="evidence" value="ECO:0007669"/>
    <property type="project" value="UniProtKB-UniRule"/>
</dbReference>
<dbReference type="GO" id="GO:0000049">
    <property type="term" value="F:tRNA binding"/>
    <property type="evidence" value="ECO:0007669"/>
    <property type="project" value="UniProtKB-UniRule"/>
</dbReference>
<dbReference type="GO" id="GO:0070475">
    <property type="term" value="P:rRNA base methylation"/>
    <property type="evidence" value="ECO:0007669"/>
    <property type="project" value="UniProtKB-UniRule"/>
</dbReference>
<dbReference type="GO" id="GO:0030488">
    <property type="term" value="P:tRNA methylation"/>
    <property type="evidence" value="ECO:0007669"/>
    <property type="project" value="UniProtKB-UniRule"/>
</dbReference>
<dbReference type="CDD" id="cd01335">
    <property type="entry name" value="Radical_SAM"/>
    <property type="match status" value="1"/>
</dbReference>
<dbReference type="FunFam" id="3.20.20.70:FF:000014">
    <property type="entry name" value="Probable dual-specificity RNA methyltransferase RlmN"/>
    <property type="match status" value="1"/>
</dbReference>
<dbReference type="Gene3D" id="1.10.150.530">
    <property type="match status" value="1"/>
</dbReference>
<dbReference type="Gene3D" id="3.20.20.70">
    <property type="entry name" value="Aldolase class I"/>
    <property type="match status" value="1"/>
</dbReference>
<dbReference type="HAMAP" id="MF_01849">
    <property type="entry name" value="RNA_methyltr_RlmN"/>
    <property type="match status" value="1"/>
</dbReference>
<dbReference type="InterPro" id="IPR013785">
    <property type="entry name" value="Aldolase_TIM"/>
</dbReference>
<dbReference type="InterPro" id="IPR040072">
    <property type="entry name" value="Methyltransferase_A"/>
</dbReference>
<dbReference type="InterPro" id="IPR048641">
    <property type="entry name" value="RlmN_N"/>
</dbReference>
<dbReference type="InterPro" id="IPR027492">
    <property type="entry name" value="RNA_MTrfase_RlmN"/>
</dbReference>
<dbReference type="InterPro" id="IPR004383">
    <property type="entry name" value="rRNA_lsu_MTrfase_RlmN/Cfr"/>
</dbReference>
<dbReference type="InterPro" id="IPR007197">
    <property type="entry name" value="rSAM"/>
</dbReference>
<dbReference type="NCBIfam" id="TIGR00048">
    <property type="entry name" value="rRNA_mod_RlmN"/>
    <property type="match status" value="1"/>
</dbReference>
<dbReference type="PANTHER" id="PTHR30544">
    <property type="entry name" value="23S RRNA METHYLTRANSFERASE"/>
    <property type="match status" value="1"/>
</dbReference>
<dbReference type="PANTHER" id="PTHR30544:SF5">
    <property type="entry name" value="RADICAL SAM CORE DOMAIN-CONTAINING PROTEIN"/>
    <property type="match status" value="1"/>
</dbReference>
<dbReference type="Pfam" id="PF04055">
    <property type="entry name" value="Radical_SAM"/>
    <property type="match status" value="1"/>
</dbReference>
<dbReference type="Pfam" id="PF21016">
    <property type="entry name" value="RlmN_N"/>
    <property type="match status" value="1"/>
</dbReference>
<dbReference type="PIRSF" id="PIRSF006004">
    <property type="entry name" value="CHP00048"/>
    <property type="match status" value="1"/>
</dbReference>
<dbReference type="SFLD" id="SFLDF00275">
    <property type="entry name" value="adenosine_C2_methyltransferase"/>
    <property type="match status" value="1"/>
</dbReference>
<dbReference type="SFLD" id="SFLDS00029">
    <property type="entry name" value="Radical_SAM"/>
    <property type="match status" value="1"/>
</dbReference>
<dbReference type="SUPFAM" id="SSF102114">
    <property type="entry name" value="Radical SAM enzymes"/>
    <property type="match status" value="1"/>
</dbReference>
<dbReference type="PROSITE" id="PS51918">
    <property type="entry name" value="RADICAL_SAM"/>
    <property type="match status" value="1"/>
</dbReference>
<feature type="chain" id="PRO_1000188608" description="Probable dual-specificity RNA methyltransferase RlmN">
    <location>
        <begin position="1"/>
        <end position="360"/>
    </location>
</feature>
<feature type="domain" description="Radical SAM core" evidence="2">
    <location>
        <begin position="97"/>
        <end position="335"/>
    </location>
</feature>
<feature type="active site" description="Proton acceptor" evidence="1">
    <location>
        <position position="91"/>
    </location>
</feature>
<feature type="active site" description="S-methylcysteine intermediate" evidence="1">
    <location>
        <position position="340"/>
    </location>
</feature>
<feature type="binding site" evidence="1">
    <location>
        <position position="111"/>
    </location>
    <ligand>
        <name>[4Fe-4S] cluster</name>
        <dbReference type="ChEBI" id="CHEBI:49883"/>
        <note>4Fe-4S-S-AdoMet</note>
    </ligand>
</feature>
<feature type="binding site" evidence="1">
    <location>
        <position position="115"/>
    </location>
    <ligand>
        <name>[4Fe-4S] cluster</name>
        <dbReference type="ChEBI" id="CHEBI:49883"/>
        <note>4Fe-4S-S-AdoMet</note>
    </ligand>
</feature>
<feature type="binding site" evidence="1">
    <location>
        <position position="118"/>
    </location>
    <ligand>
        <name>[4Fe-4S] cluster</name>
        <dbReference type="ChEBI" id="CHEBI:49883"/>
        <note>4Fe-4S-S-AdoMet</note>
    </ligand>
</feature>
<feature type="binding site" evidence="1">
    <location>
        <begin position="163"/>
        <end position="164"/>
    </location>
    <ligand>
        <name>S-adenosyl-L-methionine</name>
        <dbReference type="ChEBI" id="CHEBI:59789"/>
    </ligand>
</feature>
<feature type="binding site" evidence="1">
    <location>
        <position position="195"/>
    </location>
    <ligand>
        <name>S-adenosyl-L-methionine</name>
        <dbReference type="ChEBI" id="CHEBI:59789"/>
    </ligand>
</feature>
<feature type="binding site" evidence="1">
    <location>
        <begin position="218"/>
        <end position="220"/>
    </location>
    <ligand>
        <name>S-adenosyl-L-methionine</name>
        <dbReference type="ChEBI" id="CHEBI:59789"/>
    </ligand>
</feature>
<feature type="binding site" evidence="1">
    <location>
        <position position="296"/>
    </location>
    <ligand>
        <name>S-adenosyl-L-methionine</name>
        <dbReference type="ChEBI" id="CHEBI:59789"/>
    </ligand>
</feature>
<feature type="disulfide bond" description="(transient)" evidence="1">
    <location>
        <begin position="104"/>
        <end position="340"/>
    </location>
</feature>
<organism>
    <name type="scientific">Streptococcus equi subsp. equi (strain 4047)</name>
    <dbReference type="NCBI Taxonomy" id="553482"/>
    <lineage>
        <taxon>Bacteria</taxon>
        <taxon>Bacillati</taxon>
        <taxon>Bacillota</taxon>
        <taxon>Bacilli</taxon>
        <taxon>Lactobacillales</taxon>
        <taxon>Streptococcaceae</taxon>
        <taxon>Streptococcus</taxon>
    </lineage>
</organism>
<accession>C0MBZ4</accession>
<reference key="1">
    <citation type="journal article" date="2009" name="PLoS Pathog.">
        <title>Genomic evidence for the evolution of Streptococcus equi: host restriction, increased virulence, and genetic exchange with human pathogens.</title>
        <authorList>
            <person name="Holden M.T.G."/>
            <person name="Heather Z."/>
            <person name="Paillot R."/>
            <person name="Steward K.F."/>
            <person name="Webb K."/>
            <person name="Ainslie F."/>
            <person name="Jourdan T."/>
            <person name="Bason N.C."/>
            <person name="Holroyd N.E."/>
            <person name="Mungall K."/>
            <person name="Quail M.A."/>
            <person name="Sanders M."/>
            <person name="Simmonds M."/>
            <person name="Willey D."/>
            <person name="Brooks K."/>
            <person name="Aanensen D.M."/>
            <person name="Spratt B.G."/>
            <person name="Jolley K.A."/>
            <person name="Maiden M.C.J."/>
            <person name="Kehoe M."/>
            <person name="Chanter N."/>
            <person name="Bentley S.D."/>
            <person name="Robinson C."/>
            <person name="Maskell D.J."/>
            <person name="Parkhill J."/>
            <person name="Waller A.S."/>
        </authorList>
    </citation>
    <scope>NUCLEOTIDE SEQUENCE [LARGE SCALE GENOMIC DNA]</scope>
    <source>
        <strain>4047</strain>
    </source>
</reference>
<gene>
    <name evidence="1" type="primary">rlmN</name>
    <name type="ordered locus">SEQ_0609</name>
</gene>
<name>RLMN_STRE4</name>
<evidence type="ECO:0000255" key="1">
    <source>
        <dbReference type="HAMAP-Rule" id="MF_01849"/>
    </source>
</evidence>
<evidence type="ECO:0000255" key="2">
    <source>
        <dbReference type="PROSITE-ProRule" id="PRU01266"/>
    </source>
</evidence>
<sequence>MKPSIYGLTRDELIAWAIDNGQKAFRATQIWDWLYRKRVQSFDEMTNISKEFVAILKDSFCINPLKQRVAQESADGTVKYLFELPDGMLIETVLMRQHYGQSVCVTTQVGCNIGCTFCASGLIKKQRDLNSGEITAQIMMVQNYFDKRAQDERVSHVVVMGIGEPFDNYQNVMTFLRTINDDHGLAIGARHITVSTSGLAHKIREFANEGVQVNLAVSLHAPNNELRSSIMRINRSFPLDKLFSAIEYYIETTNRRVTFEYIMLNKVNDGVEQAQELADLTKRIRKLSYVNLIPYNPVSEHDQYSRSPKERVAAFYDILKKNGVNCVVRQEHGTDIDAACGQLRSNTMKKDRQKAAAART</sequence>
<proteinExistence type="inferred from homology"/>
<comment type="function">
    <text evidence="1">Specifically methylates position 2 of adenine 2503 in 23S rRNA and position 2 of adenine 37 in tRNAs.</text>
</comment>
<comment type="catalytic activity">
    <reaction evidence="1">
        <text>adenosine(2503) in 23S rRNA + 2 reduced [2Fe-2S]-[ferredoxin] + 2 S-adenosyl-L-methionine = 2-methyladenosine(2503) in 23S rRNA + 5'-deoxyadenosine + L-methionine + 2 oxidized [2Fe-2S]-[ferredoxin] + S-adenosyl-L-homocysteine</text>
        <dbReference type="Rhea" id="RHEA:42916"/>
        <dbReference type="Rhea" id="RHEA-COMP:10000"/>
        <dbReference type="Rhea" id="RHEA-COMP:10001"/>
        <dbReference type="Rhea" id="RHEA-COMP:10152"/>
        <dbReference type="Rhea" id="RHEA-COMP:10282"/>
        <dbReference type="ChEBI" id="CHEBI:17319"/>
        <dbReference type="ChEBI" id="CHEBI:33737"/>
        <dbReference type="ChEBI" id="CHEBI:33738"/>
        <dbReference type="ChEBI" id="CHEBI:57844"/>
        <dbReference type="ChEBI" id="CHEBI:57856"/>
        <dbReference type="ChEBI" id="CHEBI:59789"/>
        <dbReference type="ChEBI" id="CHEBI:74411"/>
        <dbReference type="ChEBI" id="CHEBI:74497"/>
        <dbReference type="EC" id="2.1.1.192"/>
    </reaction>
</comment>
<comment type="catalytic activity">
    <reaction evidence="1">
        <text>adenosine(37) in tRNA + 2 reduced [2Fe-2S]-[ferredoxin] + 2 S-adenosyl-L-methionine = 2-methyladenosine(37) in tRNA + 5'-deoxyadenosine + L-methionine + 2 oxidized [2Fe-2S]-[ferredoxin] + S-adenosyl-L-homocysteine</text>
        <dbReference type="Rhea" id="RHEA:43332"/>
        <dbReference type="Rhea" id="RHEA-COMP:10000"/>
        <dbReference type="Rhea" id="RHEA-COMP:10001"/>
        <dbReference type="Rhea" id="RHEA-COMP:10162"/>
        <dbReference type="Rhea" id="RHEA-COMP:10485"/>
        <dbReference type="ChEBI" id="CHEBI:17319"/>
        <dbReference type="ChEBI" id="CHEBI:33737"/>
        <dbReference type="ChEBI" id="CHEBI:33738"/>
        <dbReference type="ChEBI" id="CHEBI:57844"/>
        <dbReference type="ChEBI" id="CHEBI:57856"/>
        <dbReference type="ChEBI" id="CHEBI:59789"/>
        <dbReference type="ChEBI" id="CHEBI:74411"/>
        <dbReference type="ChEBI" id="CHEBI:74497"/>
        <dbReference type="EC" id="2.1.1.192"/>
    </reaction>
</comment>
<comment type="cofactor">
    <cofactor evidence="1">
        <name>[4Fe-4S] cluster</name>
        <dbReference type="ChEBI" id="CHEBI:49883"/>
    </cofactor>
    <text evidence="1">Binds 1 [4Fe-4S] cluster. The cluster is coordinated with 3 cysteines and an exchangeable S-adenosyl-L-methionine.</text>
</comment>
<comment type="subcellular location">
    <subcellularLocation>
        <location evidence="1">Cytoplasm</location>
    </subcellularLocation>
</comment>
<comment type="miscellaneous">
    <text evidence="1">Reaction proceeds by a ping-pong mechanism involving intermediate methylation of a conserved cysteine residue.</text>
</comment>
<comment type="similarity">
    <text evidence="1">Belongs to the radical SAM superfamily. RlmN family.</text>
</comment>